<name>REP1_ZYGBA</name>
<proteinExistence type="predicted"/>
<evidence type="ECO:0000256" key="1">
    <source>
        <dbReference type="SAM" id="MobiDB-lite"/>
    </source>
</evidence>
<gene>
    <name type="primary">B</name>
</gene>
<accession>P13776</accession>
<protein>
    <recommendedName>
        <fullName>Trans-acting factor B</fullName>
    </recommendedName>
    <alternativeName>
        <fullName>REP1</fullName>
    </alternativeName>
</protein>
<feature type="chain" id="PRO_0000150894" description="Trans-acting factor B">
    <location>
        <begin position="1"/>
        <end position="357"/>
    </location>
</feature>
<feature type="region of interest" description="Disordered" evidence="1">
    <location>
        <begin position="226"/>
        <end position="257"/>
    </location>
</feature>
<keyword id="KW-0614">Plasmid</keyword>
<keyword id="KW-0616">Plasmid partition</keyword>
<reference key="1">
    <citation type="journal article" date="1987" name="J. Bacteriol.">
        <title>Yeast plasmids resembling 2 micron DNA: regional similarities and diversities at the molecular level.</title>
        <authorList>
            <person name="Utatsu I."/>
            <person name="Sakamoto S."/>
            <person name="Imura T."/>
            <person name="Toh-e A."/>
        </authorList>
    </citation>
    <scope>NUCLEOTIDE SEQUENCE [GENOMIC DNA]</scope>
    <source>
        <strain>ATCC 56075 / NBRC 1047 / NCTC 6969 / NCYC 128 / CBS 12809</strain>
    </source>
</reference>
<geneLocation type="plasmid">
    <name>pSB2</name>
</geneLocation>
<sequence length="357" mass="40752">MFSREEVRASRPTKEMKMIFDVLMTFPYFAVHVPSKNILITPKGTVEIPENYQNYPILAIFYVKYLMKKNPYDLLPSTVNWPEPYVVVNTITKRFQDHKLFANKNADVYVERLQNAIASGIKIPESKKNERLGQPKKTKNVTKEIEETFIDATNARKELDEYFRKLQDGTLTGDLEGGLCKVKTLISCKALFGGHTQELQFMATNVRKVWIGEIVCGMVSNKNAIDDNDLEEEERNASGEQTTTAREESEALDTTSNGLDALNTQINAIETEESFWEAIRALHNELRTSPTQLEECRKAAVFLLGHKKILQTFTKQKDTARALFYINLKECLGTSWNLEYTEASDARKMAIKGELQN</sequence>
<comment type="function">
    <text>Plasmid partition require REP1, REP2, and a cis-acting DNA sequence (known as STB). REP1 may act by intercalating in the yeast nuclear matrix and binding STB either directly or via REP2.</text>
</comment>
<dbReference type="EMBL" id="M18274">
    <property type="protein sequence ID" value="AAA35283.1"/>
    <property type="molecule type" value="Genomic_DNA"/>
</dbReference>
<dbReference type="RefSeq" id="NP_040498.1">
    <property type="nucleotide sequence ID" value="NC_002055.1"/>
</dbReference>
<dbReference type="SMR" id="P13776"/>
<dbReference type="GO" id="GO:0030541">
    <property type="term" value="P:plasmid partitioning"/>
    <property type="evidence" value="ECO:0007669"/>
    <property type="project" value="UniProtKB-KW"/>
</dbReference>
<dbReference type="InterPro" id="IPR008897">
    <property type="entry name" value="Rep_fungi"/>
</dbReference>
<dbReference type="Pfam" id="PF05797">
    <property type="entry name" value="Rep_4"/>
    <property type="match status" value="1"/>
</dbReference>
<organism>
    <name type="scientific">Zygosaccharomyces bailii</name>
    <dbReference type="NCBI Taxonomy" id="4954"/>
    <lineage>
        <taxon>Eukaryota</taxon>
        <taxon>Fungi</taxon>
        <taxon>Dikarya</taxon>
        <taxon>Ascomycota</taxon>
        <taxon>Saccharomycotina</taxon>
        <taxon>Saccharomycetes</taxon>
        <taxon>Saccharomycetales</taxon>
        <taxon>Saccharomycetaceae</taxon>
        <taxon>Zygosaccharomyces</taxon>
    </lineage>
</organism>